<gene>
    <name type="primary">SCGB1D</name>
</gene>
<comment type="function">
    <text evidence="1">May bind androgens and other steroids. May be under transcriptional regulation of steroid hormones (By similarity).</text>
</comment>
<comment type="subcellular location">
    <subcellularLocation>
        <location evidence="2">Secreted</location>
    </subcellularLocation>
</comment>
<comment type="similarity">
    <text evidence="3">Belongs to the secretoglobin family. Lipophilin subfamily.</text>
</comment>
<name>SG1D_BOVIN</name>
<sequence>MRLSVTALLVTLALCYYEANAIVCPTFAADLTEFFYFPDLLYRLSLAKYNAPPEAVAAKMEVKQCTDRFSVKNRLIITNILGKILLNCTVTDVKAVLNPSSA</sequence>
<proteinExistence type="inferred from homology"/>
<organism>
    <name type="scientific">Bos taurus</name>
    <name type="common">Bovine</name>
    <dbReference type="NCBI Taxonomy" id="9913"/>
    <lineage>
        <taxon>Eukaryota</taxon>
        <taxon>Metazoa</taxon>
        <taxon>Chordata</taxon>
        <taxon>Craniata</taxon>
        <taxon>Vertebrata</taxon>
        <taxon>Euteleostomi</taxon>
        <taxon>Mammalia</taxon>
        <taxon>Eutheria</taxon>
        <taxon>Laurasiatheria</taxon>
        <taxon>Artiodactyla</taxon>
        <taxon>Ruminantia</taxon>
        <taxon>Pecora</taxon>
        <taxon>Bovidae</taxon>
        <taxon>Bovinae</taxon>
        <taxon>Bos</taxon>
    </lineage>
</organism>
<evidence type="ECO:0000250" key="1">
    <source>
        <dbReference type="UniProtKB" id="O95969"/>
    </source>
</evidence>
<evidence type="ECO:0000250" key="2">
    <source>
        <dbReference type="UniProtKB" id="Q6XE38"/>
    </source>
</evidence>
<evidence type="ECO:0000255" key="3"/>
<evidence type="ECO:0000269" key="4">
    <source ref="1"/>
</evidence>
<evidence type="ECO:0000305" key="5"/>
<evidence type="ECO:0000312" key="6">
    <source>
        <dbReference type="EMBL" id="AAI26827.1"/>
    </source>
</evidence>
<evidence type="ECO:0000312" key="7">
    <source>
        <dbReference type="EMBL" id="DAA00356.1"/>
    </source>
</evidence>
<reference evidence="5 6" key="1">
    <citation type="submission" date="2001-02" db="EMBL/GenBank/DDBJ databases">
        <title>Mapping of 19 mammary gland ESTs in the bovine genome.</title>
        <authorList>
            <person name="Karall-Albrecht C."/>
            <person name="Groenen M.A.M."/>
            <person name="van der Poel J.J."/>
            <person name="Barendse W."/>
            <person name="Womack J.E."/>
            <person name="Kalm E."/>
            <person name="Looft C."/>
        </authorList>
    </citation>
    <scope>NUCLEOTIDE SEQUENCE [MRNA]</scope>
    <source>
        <tissue evidence="4">Mammary gland</tissue>
    </source>
</reference>
<reference evidence="5 6" key="2">
    <citation type="submission" date="2006-10" db="EMBL/GenBank/DDBJ databases">
        <authorList>
            <consortium name="NIH - Mammalian Gene Collection (MGC) project"/>
        </authorList>
    </citation>
    <scope>NUCLEOTIDE SEQUENCE [LARGE SCALE MRNA]</scope>
    <source>
        <strain evidence="6">Hereford</strain>
        <tissue evidence="6">Fetal lung</tissue>
    </source>
</reference>
<reference evidence="7" key="3">
    <citation type="journal article" date="2002" name="Am. J. Respir. Crit. Care Med.">
        <title>Secretoglobins SCGB3A1 and SCGB3A2 define secretory cell subsets in mouse and human airways.</title>
        <authorList>
            <person name="Reynolds S.D."/>
            <person name="Reynolds P.R."/>
            <person name="Pryhuber G.S."/>
            <person name="Finder J.D."/>
            <person name="Stripp B.R."/>
        </authorList>
    </citation>
    <scope>IDENTIFICATION</scope>
</reference>
<feature type="signal peptide" evidence="3">
    <location>
        <begin position="1"/>
        <end position="21"/>
    </location>
</feature>
<feature type="chain" id="PRO_0000413004" description="Secretoglobin family 1D member" evidence="3">
    <location>
        <begin position="22"/>
        <end position="102"/>
    </location>
</feature>
<feature type="glycosylation site" description="N-linked (GlcNAc...) asparagine" evidence="3">
    <location>
        <position position="87"/>
    </location>
</feature>
<feature type="sequence conflict" description="In Ref. 2; AAI26827." evidence="5" ref="2">
    <original>E</original>
    <variation>K</variation>
    <location>
        <position position="18"/>
    </location>
</feature>
<keyword id="KW-0325">Glycoprotein</keyword>
<keyword id="KW-1185">Reference proteome</keyword>
<keyword id="KW-0964">Secreted</keyword>
<keyword id="KW-0732">Signal</keyword>
<dbReference type="EMBL" id="AI461410">
    <property type="status" value="NOT_ANNOTATED_CDS"/>
    <property type="molecule type" value="mRNA"/>
</dbReference>
<dbReference type="EMBL" id="BC126826">
    <property type="protein sequence ID" value="AAI26827.1"/>
    <property type="molecule type" value="mRNA"/>
</dbReference>
<dbReference type="EMBL" id="BK000199">
    <property type="protein sequence ID" value="DAA00356.1"/>
    <property type="molecule type" value="mRNA"/>
</dbReference>
<dbReference type="RefSeq" id="NP_001071275.1">
    <property type="nucleotide sequence ID" value="NM_001077807.1"/>
</dbReference>
<dbReference type="SMR" id="A0JNP2"/>
<dbReference type="FunCoup" id="A0JNP2">
    <property type="interactions" value="5"/>
</dbReference>
<dbReference type="STRING" id="9913.ENSBTAP00000044006"/>
<dbReference type="GlyCosmos" id="A0JNP2">
    <property type="glycosylation" value="1 site, No reported glycans"/>
</dbReference>
<dbReference type="GlyGen" id="A0JNP2">
    <property type="glycosylation" value="1 site"/>
</dbReference>
<dbReference type="PaxDb" id="9913-ENSBTAP00000044006"/>
<dbReference type="PeptideAtlas" id="A0JNP2"/>
<dbReference type="GeneID" id="338419"/>
<dbReference type="KEGG" id="bta:338419"/>
<dbReference type="CTD" id="338419"/>
<dbReference type="eggNOG" id="ENOG502SXZG">
    <property type="taxonomic scope" value="Eukaryota"/>
</dbReference>
<dbReference type="HOGENOM" id="CLU_166234_0_0_1"/>
<dbReference type="InParanoid" id="A0JNP2"/>
<dbReference type="OrthoDB" id="9713636at2759"/>
<dbReference type="TreeFam" id="TF338526"/>
<dbReference type="Proteomes" id="UP000009136">
    <property type="component" value="Unplaced"/>
</dbReference>
<dbReference type="GO" id="GO:0005615">
    <property type="term" value="C:extracellular space"/>
    <property type="evidence" value="ECO:0000318"/>
    <property type="project" value="GO_Central"/>
</dbReference>
<dbReference type="CDD" id="cd00633">
    <property type="entry name" value="Secretoglobin"/>
    <property type="match status" value="1"/>
</dbReference>
<dbReference type="InterPro" id="IPR016126">
    <property type="entry name" value="Secretoglobin"/>
</dbReference>
<dbReference type="InterPro" id="IPR035960">
    <property type="entry name" value="Secretoglobin_sf"/>
</dbReference>
<dbReference type="PANTHER" id="PTHR11332">
    <property type="entry name" value="SECRETOGLOBIN FAMILY 1D"/>
    <property type="match status" value="1"/>
</dbReference>
<dbReference type="PANTHER" id="PTHR11332:SF6">
    <property type="entry name" value="SECRETOGLOBIN FAMILY 1D MEMBER 4"/>
    <property type="match status" value="1"/>
</dbReference>
<dbReference type="Pfam" id="PF01099">
    <property type="entry name" value="Uteroglobin"/>
    <property type="match status" value="1"/>
</dbReference>
<dbReference type="SUPFAM" id="SSF48201">
    <property type="entry name" value="Uteroglobin-like"/>
    <property type="match status" value="1"/>
</dbReference>
<dbReference type="PROSITE" id="PS51311">
    <property type="entry name" value="SCGB"/>
    <property type="match status" value="1"/>
</dbReference>
<accession>A0JNP2</accession>
<accession>Q7PCK8</accession>
<protein>
    <recommendedName>
        <fullName>Secretoglobin family 1D member</fullName>
        <shortName evidence="7">LppAB</shortName>
    </recommendedName>
</protein>